<sequence>MAYPGQGGHHYQSTHGGGGGGFPAPHGYAQPGYGYAPPSGPPQGYQSGGGYAPPMQPPPGGVQGQMGYGFAPPSGPIGPPEYATNHVNYNPQGGMIGNQRYEYSSMQGKRKALLIGINYFGQNGELRGCINDVRNVQNFLRQRGYKDDDMVVLTDDQRDARSIPTRQNMTAAMHWLVRGAQPGDALFFHYSGHGGQAKATQGDEADGYNETIIPLDYQQAGQIEDDELHAIMVRPLPVGCRLTAIFDSCHSGTALDLPYVYTTSGNVKEPNVIAGVGKGIMGAAMNYARGDVLGMAKGLFSTFTTAKNTSGAEEVTKQTRSSGADVVMLSGCKDSQTSADATEAGKATGACSFAFLSVMNQYPQLTYKQMLNAVRDVLASKYSQKPQLSSSHPIDMDLLFVV</sequence>
<name>MCA1_MYCMD</name>
<dbReference type="EC" id="3.4.22.-"/>
<dbReference type="EMBL" id="CM003141">
    <property type="protein sequence ID" value="KIS71513.1"/>
    <property type="molecule type" value="Genomic_DNA"/>
</dbReference>
<dbReference type="RefSeq" id="XP_011387285.1">
    <property type="nucleotide sequence ID" value="XM_011388983.1"/>
</dbReference>
<dbReference type="SMR" id="Q4PEQ5"/>
<dbReference type="FunCoup" id="Q4PEQ5">
    <property type="interactions" value="306"/>
</dbReference>
<dbReference type="STRING" id="237631.Q4PEQ5"/>
<dbReference type="EnsemblFungi" id="KIS71513">
    <property type="protein sequence ID" value="KIS71513"/>
    <property type="gene ID" value="UMAG_01408"/>
</dbReference>
<dbReference type="GeneID" id="23562441"/>
<dbReference type="KEGG" id="uma:UMAG_01408"/>
<dbReference type="VEuPathDB" id="FungiDB:UMAG_01408"/>
<dbReference type="eggNOG" id="KOG1546">
    <property type="taxonomic scope" value="Eukaryota"/>
</dbReference>
<dbReference type="HOGENOM" id="CLU_029389_3_1_1"/>
<dbReference type="InParanoid" id="Q4PEQ5"/>
<dbReference type="OMA" id="MHRIMVT"/>
<dbReference type="OrthoDB" id="3223806at2759"/>
<dbReference type="Proteomes" id="UP000000561">
    <property type="component" value="Chromosome 2"/>
</dbReference>
<dbReference type="GO" id="GO:0005737">
    <property type="term" value="C:cytoplasm"/>
    <property type="evidence" value="ECO:0000318"/>
    <property type="project" value="GO_Central"/>
</dbReference>
<dbReference type="GO" id="GO:0004197">
    <property type="term" value="F:cysteine-type endopeptidase activity"/>
    <property type="evidence" value="ECO:0000318"/>
    <property type="project" value="GO_Central"/>
</dbReference>
<dbReference type="GO" id="GO:0006915">
    <property type="term" value="P:apoptotic process"/>
    <property type="evidence" value="ECO:0007669"/>
    <property type="project" value="UniProtKB-KW"/>
</dbReference>
<dbReference type="GO" id="GO:0006508">
    <property type="term" value="P:proteolysis"/>
    <property type="evidence" value="ECO:0000318"/>
    <property type="project" value="GO_Central"/>
</dbReference>
<dbReference type="Gene3D" id="3.40.50.12660">
    <property type="match status" value="1"/>
</dbReference>
<dbReference type="InterPro" id="IPR029030">
    <property type="entry name" value="Caspase-like_dom_sf"/>
</dbReference>
<dbReference type="InterPro" id="IPR050452">
    <property type="entry name" value="Metacaspase"/>
</dbReference>
<dbReference type="InterPro" id="IPR011600">
    <property type="entry name" value="Pept_C14_caspase"/>
</dbReference>
<dbReference type="PANTHER" id="PTHR48104:SF30">
    <property type="entry name" value="METACASPASE-1"/>
    <property type="match status" value="1"/>
</dbReference>
<dbReference type="PANTHER" id="PTHR48104">
    <property type="entry name" value="METACASPASE-4"/>
    <property type="match status" value="1"/>
</dbReference>
<dbReference type="Pfam" id="PF00656">
    <property type="entry name" value="Peptidase_C14"/>
    <property type="match status" value="1"/>
</dbReference>
<dbReference type="SUPFAM" id="SSF52129">
    <property type="entry name" value="Caspase-like"/>
    <property type="match status" value="1"/>
</dbReference>
<gene>
    <name type="primary">MCA1</name>
    <name type="ORF">UMAG_01408</name>
</gene>
<reference key="1">
    <citation type="journal article" date="2006" name="Nature">
        <title>Insights from the genome of the biotrophic fungal plant pathogen Ustilago maydis.</title>
        <authorList>
            <person name="Kaemper J."/>
            <person name="Kahmann R."/>
            <person name="Boelker M."/>
            <person name="Ma L.-J."/>
            <person name="Brefort T."/>
            <person name="Saville B.J."/>
            <person name="Banuett F."/>
            <person name="Kronstad J.W."/>
            <person name="Gold S.E."/>
            <person name="Mueller O."/>
            <person name="Perlin M.H."/>
            <person name="Woesten H.A.B."/>
            <person name="de Vries R."/>
            <person name="Ruiz-Herrera J."/>
            <person name="Reynaga-Pena C.G."/>
            <person name="Snetselaar K."/>
            <person name="McCann M."/>
            <person name="Perez-Martin J."/>
            <person name="Feldbruegge M."/>
            <person name="Basse C.W."/>
            <person name="Steinberg G."/>
            <person name="Ibeas J.I."/>
            <person name="Holloman W."/>
            <person name="Guzman P."/>
            <person name="Farman M.L."/>
            <person name="Stajich J.E."/>
            <person name="Sentandreu R."/>
            <person name="Gonzalez-Prieto J.M."/>
            <person name="Kennell J.C."/>
            <person name="Molina L."/>
            <person name="Schirawski J."/>
            <person name="Mendoza-Mendoza A."/>
            <person name="Greilinger D."/>
            <person name="Muench K."/>
            <person name="Roessel N."/>
            <person name="Scherer M."/>
            <person name="Vranes M."/>
            <person name="Ladendorf O."/>
            <person name="Vincon V."/>
            <person name="Fuchs U."/>
            <person name="Sandrock B."/>
            <person name="Meng S."/>
            <person name="Ho E.C.H."/>
            <person name="Cahill M.J."/>
            <person name="Boyce K.J."/>
            <person name="Klose J."/>
            <person name="Klosterman S.J."/>
            <person name="Deelstra H.J."/>
            <person name="Ortiz-Castellanos L."/>
            <person name="Li W."/>
            <person name="Sanchez-Alonso P."/>
            <person name="Schreier P.H."/>
            <person name="Haeuser-Hahn I."/>
            <person name="Vaupel M."/>
            <person name="Koopmann E."/>
            <person name="Friedrich G."/>
            <person name="Voss H."/>
            <person name="Schlueter T."/>
            <person name="Margolis J."/>
            <person name="Platt D."/>
            <person name="Swimmer C."/>
            <person name="Gnirke A."/>
            <person name="Chen F."/>
            <person name="Vysotskaia V."/>
            <person name="Mannhaupt G."/>
            <person name="Gueldener U."/>
            <person name="Muensterkoetter M."/>
            <person name="Haase D."/>
            <person name="Oesterheld M."/>
            <person name="Mewes H.-W."/>
            <person name="Mauceli E.W."/>
            <person name="DeCaprio D."/>
            <person name="Wade C.M."/>
            <person name="Butler J."/>
            <person name="Young S.K."/>
            <person name="Jaffe D.B."/>
            <person name="Calvo S.E."/>
            <person name="Nusbaum C."/>
            <person name="Galagan J.E."/>
            <person name="Birren B.W."/>
        </authorList>
    </citation>
    <scope>NUCLEOTIDE SEQUENCE [LARGE SCALE GENOMIC DNA]</scope>
    <source>
        <strain>DSM 14603 / FGSC 9021 / UM521</strain>
    </source>
</reference>
<reference key="2">
    <citation type="submission" date="2014-09" db="EMBL/GenBank/DDBJ databases">
        <authorList>
            <person name="Gueldener U."/>
            <person name="Muensterkoetter M."/>
            <person name="Walter M.C."/>
            <person name="Mannhaupt G."/>
            <person name="Kahmann R."/>
        </authorList>
    </citation>
    <scope>GENOME REANNOTATION</scope>
    <source>
        <strain>DSM 14603 / FGSC 9021 / UM521</strain>
    </source>
</reference>
<comment type="function">
    <text evidence="1">Involved in cell death (apoptosis).</text>
</comment>
<comment type="similarity">
    <text evidence="4">Belongs to the peptidase C14B family.</text>
</comment>
<accession>Q4PEQ5</accession>
<accession>A0A0D1CZ33</accession>
<organism>
    <name type="scientific">Mycosarcoma maydis</name>
    <name type="common">Corn smut fungus</name>
    <name type="synonym">Ustilago maydis</name>
    <dbReference type="NCBI Taxonomy" id="5270"/>
    <lineage>
        <taxon>Eukaryota</taxon>
        <taxon>Fungi</taxon>
        <taxon>Dikarya</taxon>
        <taxon>Basidiomycota</taxon>
        <taxon>Ustilaginomycotina</taxon>
        <taxon>Ustilaginomycetes</taxon>
        <taxon>Ustilaginales</taxon>
        <taxon>Ustilaginaceae</taxon>
        <taxon>Mycosarcoma</taxon>
    </lineage>
</organism>
<feature type="propeptide" id="PRO_0000333671" evidence="2">
    <location>
        <begin position="1"/>
        <end status="unknown"/>
    </location>
</feature>
<feature type="chain" id="PRO_0000333672" description="Metacaspase-1">
    <location>
        <begin status="unknown"/>
        <end position="402"/>
    </location>
</feature>
<feature type="region of interest" description="Disordered" evidence="3">
    <location>
        <begin position="1"/>
        <end position="79"/>
    </location>
</feature>
<feature type="compositionally biased region" description="Low complexity" evidence="3">
    <location>
        <begin position="23"/>
        <end position="45"/>
    </location>
</feature>
<feature type="active site" evidence="1">
    <location>
        <position position="193"/>
    </location>
</feature>
<feature type="active site" evidence="1">
    <location>
        <position position="249"/>
    </location>
</feature>
<protein>
    <recommendedName>
        <fullName>Metacaspase-1</fullName>
        <ecNumber>3.4.22.-</ecNumber>
    </recommendedName>
</protein>
<keyword id="KW-0053">Apoptosis</keyword>
<keyword id="KW-0378">Hydrolase</keyword>
<keyword id="KW-0645">Protease</keyword>
<keyword id="KW-1185">Reference proteome</keyword>
<keyword id="KW-0788">Thiol protease</keyword>
<keyword id="KW-0865">Zymogen</keyword>
<proteinExistence type="inferred from homology"/>
<evidence type="ECO:0000250" key="1"/>
<evidence type="ECO:0000255" key="2"/>
<evidence type="ECO:0000256" key="3">
    <source>
        <dbReference type="SAM" id="MobiDB-lite"/>
    </source>
</evidence>
<evidence type="ECO:0000305" key="4"/>